<proteinExistence type="evidence at protein level"/>
<feature type="signal peptide" evidence="1">
    <location>
        <begin position="1"/>
        <end position="27"/>
    </location>
</feature>
<feature type="chain" id="PRO_0000015122" description="Opioid-binding protein/cell adhesion molecule">
    <location>
        <begin position="28"/>
        <end position="322"/>
    </location>
</feature>
<feature type="propeptide" id="PRO_0000015123" description="Removed in mature form" evidence="2">
    <location>
        <begin position="323"/>
        <end position="345"/>
    </location>
</feature>
<feature type="domain" description="Ig-like C2-type 1">
    <location>
        <begin position="39"/>
        <end position="126"/>
    </location>
</feature>
<feature type="domain" description="Ig-like C2-type 2">
    <location>
        <begin position="136"/>
        <end position="219"/>
    </location>
</feature>
<feature type="domain" description="Ig-like C2-type 3">
    <location>
        <begin position="223"/>
        <end position="310"/>
    </location>
</feature>
<feature type="lipid moiety-binding region" description="GPI-anchor amidated asparagine" evidence="2">
    <location>
        <position position="322"/>
    </location>
</feature>
<feature type="glycosylation site" description="N-linked (GlcNAc...) asparagine" evidence="2">
    <location>
        <position position="44"/>
    </location>
</feature>
<feature type="glycosylation site" description="N-linked (GlcNAc...) asparagine" evidence="2">
    <location>
        <position position="70"/>
    </location>
</feature>
<feature type="glycosylation site" description="N-linked (GlcNAc...) asparagine" evidence="2">
    <location>
        <position position="140"/>
    </location>
</feature>
<feature type="glycosylation site" description="N-linked (GlcNAc...) asparagine" evidence="2">
    <location>
        <position position="285"/>
    </location>
</feature>
<feature type="glycosylation site" description="N-linked (GlcNAc...) asparagine" evidence="2">
    <location>
        <position position="293"/>
    </location>
</feature>
<feature type="glycosylation site" description="N-linked (GlcNAc...) asparagine" evidence="2">
    <location>
        <position position="306"/>
    </location>
</feature>
<feature type="disulfide bond" evidence="3">
    <location>
        <begin position="57"/>
        <end position="115"/>
    </location>
</feature>
<feature type="disulfide bond" evidence="3">
    <location>
        <begin position="157"/>
        <end position="202"/>
    </location>
</feature>
<feature type="disulfide bond" evidence="3">
    <location>
        <begin position="244"/>
        <end position="296"/>
    </location>
</feature>
<feature type="splice variant" id="VSP_002612" description="In isoform 2." evidence="4">
    <original>MGVCGYLFLPWKCLVVVSLRLLFLVPT</original>
    <variation>MYHPAYWIVFSATTALLFIP</variation>
    <location>
        <begin position="1"/>
        <end position="27"/>
    </location>
</feature>
<protein>
    <recommendedName>
        <fullName>Opioid-binding protein/cell adhesion molecule</fullName>
        <shortName>OBCAM</shortName>
        <shortName>OPCML</shortName>
        <shortName>Opioid-binding cell adhesion molecule</shortName>
    </recommendedName>
</protein>
<comment type="function">
    <text>Binds opioids in the presence of acidic lipids; probably involved in cell contact.</text>
</comment>
<comment type="subcellular location">
    <subcellularLocation>
        <location>Cell membrane</location>
        <topology>Lipid-anchor</topology>
        <topology>GPI-anchor</topology>
    </subcellularLocation>
</comment>
<comment type="alternative products">
    <event type="alternative splicing"/>
    <isoform>
        <id>P32736-1</id>
        <name>1</name>
        <sequence type="displayed"/>
    </isoform>
    <isoform>
        <id>P32736-2</id>
        <name>2</name>
        <sequence type="described" ref="VSP_002612"/>
    </isoform>
    <text>Additional isoforms seem to exist.</text>
</comment>
<comment type="similarity">
    <text evidence="4">Belongs to the immunoglobulin superfamily. IgLON family.</text>
</comment>
<organism>
    <name type="scientific">Rattus norvegicus</name>
    <name type="common">Rat</name>
    <dbReference type="NCBI Taxonomy" id="10116"/>
    <lineage>
        <taxon>Eukaryota</taxon>
        <taxon>Metazoa</taxon>
        <taxon>Chordata</taxon>
        <taxon>Craniata</taxon>
        <taxon>Vertebrata</taxon>
        <taxon>Euteleostomi</taxon>
        <taxon>Mammalia</taxon>
        <taxon>Eutheria</taxon>
        <taxon>Euarchontoglires</taxon>
        <taxon>Glires</taxon>
        <taxon>Rodentia</taxon>
        <taxon>Myomorpha</taxon>
        <taxon>Muroidea</taxon>
        <taxon>Muridae</taxon>
        <taxon>Murinae</taxon>
        <taxon>Rattus</taxon>
    </lineage>
</organism>
<evidence type="ECO:0000250" key="1"/>
<evidence type="ECO:0000255" key="2"/>
<evidence type="ECO:0000255" key="3">
    <source>
        <dbReference type="PROSITE-ProRule" id="PRU00114"/>
    </source>
</evidence>
<evidence type="ECO:0000305" key="4"/>
<name>OPCM_RAT</name>
<keyword id="KW-0025">Alternative splicing</keyword>
<keyword id="KW-0130">Cell adhesion</keyword>
<keyword id="KW-1003">Cell membrane</keyword>
<keyword id="KW-0903">Direct protein sequencing</keyword>
<keyword id="KW-1015">Disulfide bond</keyword>
<keyword id="KW-0325">Glycoprotein</keyword>
<keyword id="KW-0336">GPI-anchor</keyword>
<keyword id="KW-0393">Immunoglobulin domain</keyword>
<keyword id="KW-0449">Lipoprotein</keyword>
<keyword id="KW-0472">Membrane</keyword>
<keyword id="KW-1185">Reference proteome</keyword>
<keyword id="KW-0677">Repeat</keyword>
<keyword id="KW-0732">Signal</keyword>
<dbReference type="EMBL" id="M88710">
    <property type="protein sequence ID" value="AAA40859.1"/>
    <property type="molecule type" value="mRNA"/>
</dbReference>
<dbReference type="EMBL" id="M88711">
    <property type="protein sequence ID" value="AAA40860.1"/>
    <property type="molecule type" value="mRNA"/>
</dbReference>
<dbReference type="EMBL" id="M88709">
    <property type="protein sequence ID" value="AAA40858.1"/>
    <property type="molecule type" value="mRNA"/>
</dbReference>
<dbReference type="PIR" id="JC1238">
    <property type="entry name" value="JC1238"/>
</dbReference>
<dbReference type="PIR" id="JC1239">
    <property type="entry name" value="JC1239"/>
</dbReference>
<dbReference type="RefSeq" id="NP_446300.1">
    <property type="nucleotide sequence ID" value="NM_053848.1"/>
</dbReference>
<dbReference type="SMR" id="P32736"/>
<dbReference type="FunCoup" id="P32736">
    <property type="interactions" value="1090"/>
</dbReference>
<dbReference type="STRING" id="10116.ENSRNOP00000073684"/>
<dbReference type="GlyCosmos" id="P32736">
    <property type="glycosylation" value="6 sites, 4 glycans"/>
</dbReference>
<dbReference type="GlyGen" id="P32736">
    <property type="glycosylation" value="6 sites, 6 N-linked glycans (4 sites), 2 N-linked;o-linked glycans (1 site)"/>
</dbReference>
<dbReference type="iPTMnet" id="P32736"/>
<dbReference type="PhosphoSitePlus" id="P32736"/>
<dbReference type="PaxDb" id="10116-ENSRNOP00000044106"/>
<dbReference type="GeneID" id="116597"/>
<dbReference type="KEGG" id="rno:116597"/>
<dbReference type="UCSC" id="RGD:620635">
    <molecule id="P32736-1"/>
    <property type="organism name" value="rat"/>
</dbReference>
<dbReference type="AGR" id="RGD:620635"/>
<dbReference type="CTD" id="4978"/>
<dbReference type="RGD" id="620635">
    <property type="gene designation" value="Opcml"/>
</dbReference>
<dbReference type="eggNOG" id="KOG3510">
    <property type="taxonomic scope" value="Eukaryota"/>
</dbReference>
<dbReference type="InParanoid" id="P32736"/>
<dbReference type="PhylomeDB" id="P32736"/>
<dbReference type="Reactome" id="R-RNO-163125">
    <property type="pathway name" value="Post-translational modification: synthesis of GPI-anchored proteins"/>
</dbReference>
<dbReference type="PRO" id="PR:P32736"/>
<dbReference type="Proteomes" id="UP000002494">
    <property type="component" value="Unplaced"/>
</dbReference>
<dbReference type="GO" id="GO:0097440">
    <property type="term" value="C:apical dendrite"/>
    <property type="evidence" value="ECO:0000314"/>
    <property type="project" value="RGD"/>
</dbReference>
<dbReference type="GO" id="GO:0043197">
    <property type="term" value="C:dendritic spine"/>
    <property type="evidence" value="ECO:0000314"/>
    <property type="project" value="RGD"/>
</dbReference>
<dbReference type="GO" id="GO:0043025">
    <property type="term" value="C:neuronal cell body"/>
    <property type="evidence" value="ECO:0000314"/>
    <property type="project" value="RGD"/>
</dbReference>
<dbReference type="GO" id="GO:0005886">
    <property type="term" value="C:plasma membrane"/>
    <property type="evidence" value="ECO:0007669"/>
    <property type="project" value="UniProtKB-SubCell"/>
</dbReference>
<dbReference type="GO" id="GO:0014069">
    <property type="term" value="C:postsynaptic density"/>
    <property type="evidence" value="ECO:0000314"/>
    <property type="project" value="RGD"/>
</dbReference>
<dbReference type="GO" id="GO:0098552">
    <property type="term" value="C:side of membrane"/>
    <property type="evidence" value="ECO:0007669"/>
    <property type="project" value="UniProtKB-KW"/>
</dbReference>
<dbReference type="GO" id="GO:0007155">
    <property type="term" value="P:cell adhesion"/>
    <property type="evidence" value="ECO:0007669"/>
    <property type="project" value="UniProtKB-KW"/>
</dbReference>
<dbReference type="GO" id="GO:0060253">
    <property type="term" value="P:negative regulation of glial cell proliferation"/>
    <property type="evidence" value="ECO:0000314"/>
    <property type="project" value="RGD"/>
</dbReference>
<dbReference type="GO" id="GO:0045793">
    <property type="term" value="P:positive regulation of cell size"/>
    <property type="evidence" value="ECO:0000314"/>
    <property type="project" value="RGD"/>
</dbReference>
<dbReference type="GO" id="GO:0051965">
    <property type="term" value="P:positive regulation of synapse assembly"/>
    <property type="evidence" value="ECO:0000314"/>
    <property type="project" value="RGD"/>
</dbReference>
<dbReference type="FunFam" id="2.60.40.10:FF:000013">
    <property type="entry name" value="cell adhesion molecule 1 isoform X1"/>
    <property type="match status" value="1"/>
</dbReference>
<dbReference type="FunFam" id="2.60.40.10:FF:000305">
    <property type="entry name" value="neurotrimin isoform X2"/>
    <property type="match status" value="1"/>
</dbReference>
<dbReference type="FunFam" id="2.60.40.10:FF:000113">
    <property type="entry name" value="Opioid-binding protein/cell adhesion molecule"/>
    <property type="match status" value="1"/>
</dbReference>
<dbReference type="Gene3D" id="2.60.40.10">
    <property type="entry name" value="Immunoglobulins"/>
    <property type="match status" value="3"/>
</dbReference>
<dbReference type="InterPro" id="IPR007110">
    <property type="entry name" value="Ig-like_dom"/>
</dbReference>
<dbReference type="InterPro" id="IPR036179">
    <property type="entry name" value="Ig-like_dom_sf"/>
</dbReference>
<dbReference type="InterPro" id="IPR013783">
    <property type="entry name" value="Ig-like_fold"/>
</dbReference>
<dbReference type="InterPro" id="IPR013098">
    <property type="entry name" value="Ig_I-set"/>
</dbReference>
<dbReference type="InterPro" id="IPR003599">
    <property type="entry name" value="Ig_sub"/>
</dbReference>
<dbReference type="InterPro" id="IPR003598">
    <property type="entry name" value="Ig_sub2"/>
</dbReference>
<dbReference type="InterPro" id="IPR050876">
    <property type="entry name" value="IgLON_domain"/>
</dbReference>
<dbReference type="InterPro" id="IPR013151">
    <property type="entry name" value="Immunoglobulin_dom"/>
</dbReference>
<dbReference type="PANTHER" id="PTHR42757">
    <property type="entry name" value="IGLON FAMILY OF IMMUNOGLOBULIN SUPERFAMILY-RELATED"/>
    <property type="match status" value="1"/>
</dbReference>
<dbReference type="PANTHER" id="PTHR42757:SF17">
    <property type="entry name" value="OPIOID-BINDING PROTEIN_CELL ADHESION MOLECULE"/>
    <property type="match status" value="1"/>
</dbReference>
<dbReference type="Pfam" id="PF07679">
    <property type="entry name" value="I-set"/>
    <property type="match status" value="1"/>
</dbReference>
<dbReference type="Pfam" id="PF00047">
    <property type="entry name" value="ig"/>
    <property type="match status" value="1"/>
</dbReference>
<dbReference type="Pfam" id="PF13927">
    <property type="entry name" value="Ig_3"/>
    <property type="match status" value="1"/>
</dbReference>
<dbReference type="SMART" id="SM00409">
    <property type="entry name" value="IG"/>
    <property type="match status" value="3"/>
</dbReference>
<dbReference type="SMART" id="SM00408">
    <property type="entry name" value="IGc2"/>
    <property type="match status" value="3"/>
</dbReference>
<dbReference type="SUPFAM" id="SSF48726">
    <property type="entry name" value="Immunoglobulin"/>
    <property type="match status" value="3"/>
</dbReference>
<dbReference type="PROSITE" id="PS50835">
    <property type="entry name" value="IG_LIKE"/>
    <property type="match status" value="3"/>
</dbReference>
<gene>
    <name type="primary">Opcml</name>
    <name type="synonym">Obcam</name>
</gene>
<accession>P32736</accession>
<accession>P32735</accession>
<accession>Q01653</accession>
<accession>Q01654</accession>
<sequence>MGVCGYLFLPWKCLVVVSLRLLFLVPTGVPVRSGDATFPKAMDNVTVRQGESATLRCTIDDRVTRVAWLNRSTILYAGNDKWSIDPRVIILVNTPTQYSIMIQNVDVYDEGPYTCSVQTDNHPKTSRVHLIVQVPPQIMNISSDITVNEISSVTLLCLAIGRPEPTVTWRHLSVKEGQGFVSEDEYLEISDIKRDQSGEYECSALNDVAAPDVRKVKITVNYPPYISKAKNTGVSVGQKGILSCEASAVPMAEFQWFKEDTRLATGLDGVRIENKGRISTLTFFNVSEKDYGNYTCVATNKLGNTNASITLYGPGAVIDGVNSASRALACLWLSGTFFAHFFIKF</sequence>
<reference key="1">
    <citation type="journal article" date="1992" name="Gene">
        <title>Opioid-binding cell adhesion molecule (OBCAM)-related clones from a rat brain cDNA library.</title>
        <authorList>
            <person name="Lippman D.A."/>
            <person name="Lee N.M."/>
            <person name="Loh H.H."/>
        </authorList>
    </citation>
    <scope>NUCLEOTIDE SEQUENCE [MRNA]</scope>
    <source>
        <tissue>Brain</tissue>
    </source>
</reference>
<reference key="2">
    <citation type="submission" date="2007-09" db="UniProtKB">
        <authorList>
            <person name="Lubec G."/>
            <person name="Kang S.U."/>
            <person name="Lubec S."/>
        </authorList>
    </citation>
    <scope>PROTEIN SEQUENCE OF 33-40; 49-62; 72-87; 171-214; 218-228; 240-258; 263-271 AND 302-344</scope>
    <scope>IDENTIFICATION BY MASS SPECTROMETRY</scope>
    <source>
        <strain>Sprague-Dawley</strain>
        <tissue>Brain</tissue>
    </source>
</reference>
<reference key="3">
    <citation type="journal article" date="1995" name="J. Neurosci.">
        <title>Cloning of neurotrimin defines a new subfamily of differentially expressed neural cell adhesion molecules.</title>
        <authorList>
            <person name="Struyk A.F."/>
            <person name="Canoll P.D."/>
            <person name="Wolfgang M.J."/>
            <person name="Rosen C.L."/>
            <person name="D'Eustachio P."/>
            <person name="Salzer J.L."/>
        </authorList>
    </citation>
    <scope>PROTEIN SEQUENCE OF 195-214</scope>
    <scope>GPI-ANCHOR</scope>
</reference>